<dbReference type="EMBL" id="DQ885644">
    <property type="protein sequence ID" value="ABH12153.1"/>
    <property type="molecule type" value="mRNA"/>
</dbReference>
<dbReference type="RefSeq" id="XP_054324388.1">
    <property type="nucleotide sequence ID" value="XM_054468413.2"/>
</dbReference>
<dbReference type="SMR" id="Q0MQJ0"/>
<dbReference type="GeneID" id="129022316"/>
<dbReference type="GO" id="GO:0005743">
    <property type="term" value="C:mitochondrial inner membrane"/>
    <property type="evidence" value="ECO:0007669"/>
    <property type="project" value="UniProtKB-SubCell"/>
</dbReference>
<dbReference type="GO" id="GO:0045271">
    <property type="term" value="C:respiratory chain complex I"/>
    <property type="evidence" value="ECO:0000250"/>
    <property type="project" value="UniProtKB"/>
</dbReference>
<dbReference type="GO" id="GO:0042775">
    <property type="term" value="P:mitochondrial ATP synthesis coupled electron transport"/>
    <property type="evidence" value="ECO:0007669"/>
    <property type="project" value="TreeGrafter"/>
</dbReference>
<dbReference type="InterPro" id="IPR026193">
    <property type="entry name" value="NDUFV3"/>
</dbReference>
<dbReference type="PANTHER" id="PTHR17117:SF1">
    <property type="entry name" value="NADH DEHYDROGENASE [UBIQUINONE] FLAVOPROTEIN 3, MITOCHONDRIAL"/>
    <property type="match status" value="1"/>
</dbReference>
<dbReference type="PANTHER" id="PTHR17117">
    <property type="entry name" value="NADH-UBIQUINONE OXIDOREDUCTASE"/>
    <property type="match status" value="1"/>
</dbReference>
<dbReference type="Pfam" id="PF15880">
    <property type="entry name" value="NDUFV3"/>
    <property type="match status" value="1"/>
</dbReference>
<reference key="1">
    <citation type="journal article" date="2006" name="Gene">
        <title>Adaptive selection of mitochondrial complex I subunits during primate radiation.</title>
        <authorList>
            <person name="Mishmar D."/>
            <person name="Ruiz-Pesini E."/>
            <person name="Mondragon-Palomino M."/>
            <person name="Procaccio V."/>
            <person name="Gaut B."/>
            <person name="Wallace D.C."/>
        </authorList>
    </citation>
    <scope>NUCLEOTIDE SEQUENCE [MRNA]</scope>
</reference>
<comment type="function">
    <text evidence="2">Accessory subunit of the mitochondrial membrane respiratory chain NADH dehydrogenase (Complex I), that is believed not to be involved in catalysis. Complex I functions in the transfer of electrons from NADH to the respiratory chain. The immediate electron acceptor for the enzyme is believed to be ubiquinone. May be the terminally assembled subunit of Complex I.</text>
</comment>
<comment type="subunit">
    <text evidence="2">Complex I is composed of 45 different subunits. This is a component of the flavoprotein-sulfur (FP) fragment of the enzyme.</text>
</comment>
<comment type="subcellular location">
    <subcellularLocation>
        <location evidence="2">Mitochondrion inner membrane</location>
        <topology evidence="2">Peripheral membrane protein</topology>
        <orientation evidence="2">Matrix side</orientation>
    </subcellularLocation>
</comment>
<comment type="similarity">
    <text evidence="4">Belongs to the complex I NDUFV3 subunit family.</text>
</comment>
<name>NDUV3_PONPY</name>
<proteinExistence type="inferred from homology"/>
<organism>
    <name type="scientific">Pongo pygmaeus</name>
    <name type="common">Bornean orangutan</name>
    <dbReference type="NCBI Taxonomy" id="9600"/>
    <lineage>
        <taxon>Eukaryota</taxon>
        <taxon>Metazoa</taxon>
        <taxon>Chordata</taxon>
        <taxon>Craniata</taxon>
        <taxon>Vertebrata</taxon>
        <taxon>Euteleostomi</taxon>
        <taxon>Mammalia</taxon>
        <taxon>Eutheria</taxon>
        <taxon>Euarchontoglires</taxon>
        <taxon>Primates</taxon>
        <taxon>Haplorrhini</taxon>
        <taxon>Catarrhini</taxon>
        <taxon>Hominidae</taxon>
        <taxon>Pongo</taxon>
    </lineage>
</organism>
<keyword id="KW-0249">Electron transport</keyword>
<keyword id="KW-0472">Membrane</keyword>
<keyword id="KW-0496">Mitochondrion</keyword>
<keyword id="KW-0999">Mitochondrion inner membrane</keyword>
<keyword id="KW-0597">Phosphoprotein</keyword>
<keyword id="KW-0679">Respiratory chain</keyword>
<keyword id="KW-0809">Transit peptide</keyword>
<keyword id="KW-0813">Transport</keyword>
<sequence>MAAPCLLRQGRAGALKTMLQEAQVFRGLASTVSLSAESGKSEKGQPHNPKKQSPPKKPAPVPAEPFDNTTYKNLQHHDYTTYTFLDLNLELSKFRMPQPSSGRESPRH</sequence>
<protein>
    <recommendedName>
        <fullName>NADH dehydrogenase [ubiquinone] flavoprotein 3, mitochondrial</fullName>
    </recommendedName>
    <alternativeName>
        <fullName>Complex I-9kD</fullName>
        <shortName>CI-9kD</shortName>
    </alternativeName>
    <alternativeName>
        <fullName>NADH-ubiquinone oxidoreductase 9 kDa subunit</fullName>
    </alternativeName>
</protein>
<accession>Q0MQJ0</accession>
<evidence type="ECO:0000250" key="1"/>
<evidence type="ECO:0000250" key="2">
    <source>
        <dbReference type="UniProtKB" id="P56181"/>
    </source>
</evidence>
<evidence type="ECO:0000256" key="3">
    <source>
        <dbReference type="SAM" id="MobiDB-lite"/>
    </source>
</evidence>
<evidence type="ECO:0000305" key="4"/>
<feature type="transit peptide" description="Mitochondrion" evidence="1">
    <location>
        <begin position="1"/>
        <end position="34"/>
    </location>
</feature>
<feature type="chain" id="PRO_0000251885" description="NADH dehydrogenase [ubiquinone] flavoprotein 3, mitochondrial">
    <location>
        <begin position="35"/>
        <end position="108"/>
    </location>
</feature>
<feature type="region of interest" description="Disordered" evidence="3">
    <location>
        <begin position="33"/>
        <end position="72"/>
    </location>
</feature>
<feature type="modified residue" description="Phosphoserine" evidence="2">
    <location>
        <position position="105"/>
    </location>
</feature>
<gene>
    <name type="primary">NDUFV3</name>
</gene>